<comment type="function">
    <text evidence="10 14 15 17 20">Cytosolic calcium-activated calcium channel that mediates the release of Ca(2+) from the sarcoplasmic reticulum into the cytosol and thereby plays a key role in triggering cardiac muscle contraction. Aberrant channel activation can lead to cardiac arrhythmia. In cardiac myocytes, calcium release is triggered by increased Ca(2+) cytosolic levels due to activation of the L-type calcium channel CACNA1C. The calcium channel activity is modulated by formation of heterotetramers with RYR3. Required for cellular calcium ion homeostasis. Required for embryonic heart development.</text>
</comment>
<comment type="catalytic activity">
    <reaction evidence="10 17">
        <text>Ca(2+)(in) = Ca(2+)(out)</text>
        <dbReference type="Rhea" id="RHEA:29671"/>
        <dbReference type="ChEBI" id="CHEBI:29108"/>
    </reaction>
</comment>
<comment type="activity regulation">
    <text evidence="3">The calcium release is activated by increased cytosolic calcium levels, by nitric oxyde (NO), caffeine and ATP. Channel activity is modulated by the alkaloid ryanodine that binds to the open Ca-release channel with high affinity. At low concentrations, ryanodine maintains the channel in an open conformation. High ryanodine concentrations inhibit channel activity. Channel activity is regulated by calmodulin (CALM). Channel activity is inhibited by magnesium ions, possibly by competition for calcium binding sites.</text>
</comment>
<comment type="subunit">
    <text evidence="4 5 10 11 14 15 16">Homotetramer. Can also form heterotetramers with RYR1 and RYR3. Interacts with CALM and S100A1; these interactions regulate channel activity. Identified in a complex composed of RYR2, FKBP1B, PKA catalytic subunit, PRKAR2A, AKAP6, and the protein phosphatases PP2A and PP1. Interacts directly with FKBP1B, PKA, PP1 and PP2A (By similarity). Interacts with FKBP1A and FKBP1B; these interactions may stabilize the channel in its closed state and prevent Ca(2+) leaks. Interacts with SELENON (By similarity). Identified in a complex, composed of FSD2, CMYA5 and RYR2 (PubMed:28740084). Interacts with PKD2 (via N-terminus); regulates RYR2 channel activity (PubMed:17404231).</text>
</comment>
<comment type="interaction">
    <interactant intactId="EBI-643628">
        <id>E9Q401</id>
    </interactant>
    <interactant intactId="EBI-2308458">
        <id>Q6PHZ2</id>
        <label>Camk2d</label>
    </interactant>
    <organismsDiffer>false</organismsDiffer>
    <experiments>2</experiments>
</comment>
<comment type="interaction">
    <interactant intactId="EBI-643628">
        <id>E9Q401</id>
    </interactant>
    <interactant intactId="EBI-6379859">
        <id>Q9Z2I2</id>
        <label>Fkbp1b</label>
    </interactant>
    <organismsDiffer>false</organismsDiffer>
    <experiments>3</experiments>
</comment>
<comment type="interaction">
    <interactant intactId="EBI-643628">
        <id>E9Q401</id>
    </interactant>
    <interactant intactId="EBI-6902760">
        <id>Q8K4S1</id>
        <label>Plce1</label>
    </interactant>
    <organismsDiffer>false</organismsDiffer>
    <experiments>2</experiments>
</comment>
<comment type="interaction">
    <interactant intactId="EBI-643628">
        <id>E9Q401</id>
    </interactant>
    <interactant intactId="EBI-643628">
        <id>E9Q401</id>
        <label>Ryr2</label>
    </interactant>
    <organismsDiffer>false</organismsDiffer>
    <experiments>7</experiments>
</comment>
<comment type="interaction">
    <interactant intactId="EBI-643628">
        <id>E9Q401</id>
    </interactant>
    <interactant intactId="EBI-9639760">
        <id>P23327</id>
        <label>HRC</label>
    </interactant>
    <organismsDiffer>true</organismsDiffer>
    <experiments>3</experiments>
</comment>
<comment type="subcellular location">
    <subcellularLocation>
        <location evidence="22">Sarcoplasmic reticulum membrane</location>
        <topology evidence="6">Multi-pass membrane protein</topology>
    </subcellularLocation>
</comment>
<comment type="tissue specificity">
    <text evidence="18 19">Highly expressed in heart, lung, cerebellum and brain. Detected at lower levels in adrenal gland, stomach, thymus, esophagus and ovary.</text>
</comment>
<comment type="domain">
    <text evidence="3">The calcium release channel activity resides in the C-terminal region while the remaining part of the protein resides in the cytoplasm.</text>
</comment>
<comment type="PTM">
    <text evidence="12 14 15">Channel activity is modulated by phosphorylation. Phosphorylation at Ser-2807 and Ser-2813 increases the open probability of the calcium channel. Phosphorylation is increased in failing heart, leading to calcium leaks and increased cytoplasmic Ca(2+) levels.</text>
</comment>
<comment type="PTM">
    <text evidence="12">Phosphorylation at Ser-2030 by PKA enhances the response to lumenal calcium.</text>
</comment>
<comment type="disruption phenotype">
    <text evidence="20">Embryonically lethal. Embryos die at about 10 dpc, due to defects in heart tube development. Cardiac myotubes display enlarged rough endoplasmic reticulum and cytoplasmic vesicles that contain high levels of Ca(2+).</text>
</comment>
<comment type="similarity">
    <text evidence="21">Belongs to the ryanodine receptor (TC 1.A.3.1) family. RYR2 subfamily.</text>
</comment>
<accession>E9Q401</accession>
<accession>O70181</accession>
<accession>Q62174</accession>
<accession>Q62197</accession>
<accession>Q9ERN6</accession>
<evidence type="ECO:0000250" key="1"/>
<evidence type="ECO:0000250" key="2">
    <source>
        <dbReference type="UniProtKB" id="B0LPN4"/>
    </source>
</evidence>
<evidence type="ECO:0000250" key="3">
    <source>
        <dbReference type="UniProtKB" id="P11716"/>
    </source>
</evidence>
<evidence type="ECO:0000250" key="4">
    <source>
        <dbReference type="UniProtKB" id="P30957"/>
    </source>
</evidence>
<evidence type="ECO:0000250" key="5">
    <source>
        <dbReference type="UniProtKB" id="Q92736"/>
    </source>
</evidence>
<evidence type="ECO:0000255" key="6"/>
<evidence type="ECO:0000255" key="7">
    <source>
        <dbReference type="PROSITE-ProRule" id="PRU00131"/>
    </source>
</evidence>
<evidence type="ECO:0000255" key="8">
    <source>
        <dbReference type="PROSITE-ProRule" id="PRU00548"/>
    </source>
</evidence>
<evidence type="ECO:0000256" key="9">
    <source>
        <dbReference type="SAM" id="MobiDB-lite"/>
    </source>
</evidence>
<evidence type="ECO:0000269" key="10">
    <source>
    </source>
</evidence>
<evidence type="ECO:0000269" key="11">
    <source>
    </source>
</evidence>
<evidence type="ECO:0000269" key="12">
    <source>
    </source>
</evidence>
<evidence type="ECO:0000269" key="13">
    <source>
    </source>
</evidence>
<evidence type="ECO:0000269" key="14">
    <source>
    </source>
</evidence>
<evidence type="ECO:0000269" key="15">
    <source>
    </source>
</evidence>
<evidence type="ECO:0000269" key="16">
    <source>
    </source>
</evidence>
<evidence type="ECO:0000269" key="17">
    <source>
    </source>
</evidence>
<evidence type="ECO:0000269" key="18">
    <source>
    </source>
</evidence>
<evidence type="ECO:0000269" key="19">
    <source>
    </source>
</evidence>
<evidence type="ECO:0000269" key="20">
    <source>
    </source>
</evidence>
<evidence type="ECO:0000305" key="21"/>
<evidence type="ECO:0000305" key="22">
    <source>
    </source>
</evidence>
<evidence type="ECO:0000312" key="23">
    <source>
        <dbReference type="MGI" id="MGI:99685"/>
    </source>
</evidence>
<evidence type="ECO:0007744" key="24">
    <source>
        <dbReference type="PDB" id="2MC2"/>
    </source>
</evidence>
<evidence type="ECO:0007744" key="25">
    <source>
        <dbReference type="PDB" id="4ETV"/>
    </source>
</evidence>
<evidence type="ECO:0007744" key="26">
    <source>
        <dbReference type="PDB" id="4KEI"/>
    </source>
</evidence>
<evidence type="ECO:0007744" key="27">
    <source>
        <dbReference type="PDB" id="4KEJ"/>
    </source>
</evidence>
<evidence type="ECO:0007744" key="28">
    <source>
        <dbReference type="PDB" id="4KEK"/>
    </source>
</evidence>
<evidence type="ECO:0007744" key="29">
    <source>
        <dbReference type="PDB" id="5C33"/>
    </source>
</evidence>
<evidence type="ECO:0007744" key="30">
    <source>
    </source>
</evidence>
<evidence type="ECO:0007829" key="31">
    <source>
        <dbReference type="PDB" id="3IM6"/>
    </source>
</evidence>
<evidence type="ECO:0007829" key="32">
    <source>
        <dbReference type="PDB" id="3QR5"/>
    </source>
</evidence>
<evidence type="ECO:0007829" key="33">
    <source>
        <dbReference type="PDB" id="4ETV"/>
    </source>
</evidence>
<evidence type="ECO:0007829" key="34">
    <source>
        <dbReference type="PDB" id="4KEJ"/>
    </source>
</evidence>
<evidence type="ECO:0007829" key="35">
    <source>
        <dbReference type="PDB" id="4L4H"/>
    </source>
</evidence>
<evidence type="ECO:0007829" key="36">
    <source>
        <dbReference type="PDB" id="4P9I"/>
    </source>
</evidence>
<evidence type="ECO:0007829" key="37">
    <source>
        <dbReference type="PDB" id="5C33"/>
    </source>
</evidence>
<evidence type="ECO:0007829" key="38">
    <source>
        <dbReference type="PDB" id="6MM6"/>
    </source>
</evidence>
<evidence type="ECO:0007829" key="39">
    <source>
        <dbReference type="PDB" id="6MM7"/>
    </source>
</evidence>
<evidence type="ECO:0007829" key="40">
    <source>
        <dbReference type="PDB" id="6MM8"/>
    </source>
</evidence>
<reference key="1">
    <citation type="journal article" date="1999" name="J. Biol. Chem.">
        <title>Molecular identification of the ryanodine receptor pore-forming segment.</title>
        <authorList>
            <person name="Zhao M."/>
            <person name="Li P."/>
            <person name="Li X."/>
            <person name="Zhang L."/>
            <person name="Winkfein R.J."/>
            <person name="Chen S.R."/>
        </authorList>
    </citation>
    <scope>NUCLEOTIDE SEQUENCE [MRNA]</scope>
    <scope>FUNCTION</scope>
    <scope>TRANSPORTER ACTIVITY</scope>
    <scope>SUBCELLULAR LOCATION</scope>
    <scope>SUBUNIT</scope>
    <scope>MUTAGENESIS OF GLY-4819; ARG-4821; GLY-4823; GLY-4824; GLY-4825; GLY-4827 AND ASP-4828</scope>
</reference>
<reference key="2">
    <citation type="journal article" date="2009" name="PLoS Biol.">
        <title>Lineage-specific biology revealed by a finished genome assembly of the mouse.</title>
        <authorList>
            <person name="Church D.M."/>
            <person name="Goodstadt L."/>
            <person name="Hillier L.W."/>
            <person name="Zody M.C."/>
            <person name="Goldstein S."/>
            <person name="She X."/>
            <person name="Bult C.J."/>
            <person name="Agarwala R."/>
            <person name="Cherry J.L."/>
            <person name="DiCuccio M."/>
            <person name="Hlavina W."/>
            <person name="Kapustin Y."/>
            <person name="Meric P."/>
            <person name="Maglott D."/>
            <person name="Birtle Z."/>
            <person name="Marques A.C."/>
            <person name="Graves T."/>
            <person name="Zhou S."/>
            <person name="Teague B."/>
            <person name="Potamousis K."/>
            <person name="Churas C."/>
            <person name="Place M."/>
            <person name="Herschleb J."/>
            <person name="Runnheim R."/>
            <person name="Forrest D."/>
            <person name="Amos-Landgraf J."/>
            <person name="Schwartz D.C."/>
            <person name="Cheng Z."/>
            <person name="Lindblad-Toh K."/>
            <person name="Eichler E.E."/>
            <person name="Ponting C.P."/>
        </authorList>
    </citation>
    <scope>NUCLEOTIDE SEQUENCE [LARGE SCALE GENOMIC DNA]</scope>
    <source>
        <strain>C57BL/6J</strain>
    </source>
</reference>
<reference key="3">
    <citation type="journal article" date="1998" name="EMBO J.">
        <title>Embryonic lethality and abnormal cardiac myocytes in mice lacking ryanodine receptor type 2.</title>
        <authorList>
            <person name="Takeshima H."/>
            <person name="Komazaki S."/>
            <person name="Hirose K."/>
            <person name="Nishi M."/>
            <person name="Noda T."/>
            <person name="Iino M."/>
        </authorList>
    </citation>
    <scope>NUCLEOTIDE SEQUENCE [GENOMIC DNA] OF 1-16</scope>
    <scope>FUNCTION</scope>
    <scope>DISRUPTION PHENOTYPE</scope>
</reference>
<reference key="4">
    <citation type="journal article" date="1995" name="J. Cell Biol.">
        <title>The ryanodine receptor/calcium channel genes are widely and differentially expressed in murine brain and peripheral tissues.</title>
        <authorList>
            <person name="Giannini G."/>
            <person name="Conti A."/>
            <person name="Mammarella S."/>
            <person name="Scrobogna M."/>
            <person name="Sorrentino V."/>
        </authorList>
    </citation>
    <scope>NUCLEOTIDE SEQUENCE [MRNA] OF 4145-4966</scope>
    <scope>TISSUE SPECIFICITY</scope>
    <source>
        <strain>BALB/cJ</strain>
        <tissue>Brain</tissue>
    </source>
</reference>
<reference key="5">
    <citation type="journal article" date="1995" name="EMBO J.">
        <title>Ca(2+)-induced Ca2+ release in myocytes from dyspedic mice lacking the type-1 ryanodine receptor.</title>
        <authorList>
            <person name="Takeshima H."/>
            <person name="Yamazawa T."/>
            <person name="Ikemoto T."/>
            <person name="Takekura H."/>
            <person name="Nishi M."/>
            <person name="Noda T."/>
            <person name="Iino M."/>
        </authorList>
    </citation>
    <scope>NUCLEOTIDE SEQUENCE [MRNA] OF 4863-4966</scope>
    <scope>TISSUE SPECIFICITY</scope>
    <source>
        <strain>C57BL/6J</strain>
        <tissue>Heart</tissue>
    </source>
</reference>
<reference key="6">
    <citation type="journal article" date="2007" name="J. Biol. Chem.">
        <title>Functional consequence of protein kinase A-dependent phosphorylation of the cardiac ryanodine receptor: sensitization of store overload-induced Ca2+ release.</title>
        <authorList>
            <person name="Xiao B."/>
            <person name="Tian X."/>
            <person name="Xie W."/>
            <person name="Jones P.P."/>
            <person name="Cai S."/>
            <person name="Wang X."/>
            <person name="Jiang D."/>
            <person name="Kong H."/>
            <person name="Zhang L."/>
            <person name="Chen K."/>
            <person name="Walsh M.P."/>
            <person name="Cheng H."/>
            <person name="Chen S.R.W."/>
        </authorList>
    </citation>
    <scope>PHOSPHORYLATION AT SER-2030</scope>
</reference>
<reference key="7">
    <citation type="journal article" date="2007" name="Proc. Natl. Acad. Sci. U.S.A.">
        <title>Regulation of ryanodine receptor-dependent calcium signaling by polycystin-2.</title>
        <authorList>
            <person name="Anyatonwu G.I."/>
            <person name="Estrada M."/>
            <person name="Tian X."/>
            <person name="Somlo S."/>
            <person name="Ehrlich B.E."/>
        </authorList>
    </citation>
    <scope>INTERACTION WITH PKD2</scope>
</reference>
<reference key="8">
    <citation type="journal article" date="2010" name="Cell">
        <title>A tissue-specific atlas of mouse protein phosphorylation and expression.</title>
        <authorList>
            <person name="Huttlin E.L."/>
            <person name="Jedrychowski M.P."/>
            <person name="Elias J.E."/>
            <person name="Goswami T."/>
            <person name="Rad R."/>
            <person name="Beausoleil S.A."/>
            <person name="Villen J."/>
            <person name="Haas W."/>
            <person name="Sowa M.E."/>
            <person name="Gygi S.P."/>
        </authorList>
    </citation>
    <scope>PHOSPHORYLATION [LARGE SCALE ANALYSIS] AT SER-1341; SER-2368; SER-2796; SER-2807; SER-2810; SER-2813 AND SER-2946</scope>
    <scope>IDENTIFICATION BY MASS SPECTROMETRY [LARGE SCALE ANALYSIS]</scope>
    <source>
        <tissue>Brain</tissue>
        <tissue>Heart</tissue>
        <tissue>Lung</tissue>
    </source>
</reference>
<reference key="9">
    <citation type="journal article" date="2010" name="Circulation">
        <title>Ryanodine receptor phosphorylation by calcium/calmodulin-dependent protein kinase II promotes life-threatening ventricular arrhythmias in mice with heart failure.</title>
        <authorList>
            <person name="van Oort R.J."/>
            <person name="McCauley M.D."/>
            <person name="Dixit S.S."/>
            <person name="Pereira L."/>
            <person name="Yang Y."/>
            <person name="Respress J.L."/>
            <person name="Wang Q."/>
            <person name="De Almeida A.C."/>
            <person name="Skapura D.G."/>
            <person name="Anderson M.E."/>
            <person name="Bers D.M."/>
            <person name="Wehrens X.H."/>
        </authorList>
    </citation>
    <scope>FUNCTION</scope>
    <scope>PHOSPHORYLATION AT SER-2807 AND SER-2813</scope>
    <scope>INTERACTION WITH FKBP1B</scope>
    <scope>MUTAGENESIS OF SER-2813</scope>
</reference>
<reference key="10">
    <citation type="journal article" date="2010" name="Circ. Res.">
        <title>Kinetics of FKBP12.6 binding to ryanodine receptors in permeabilized cardiac myocytes and effects on Ca sparks.</title>
        <authorList>
            <person name="Guo T."/>
            <person name="Cornea R.L."/>
            <person name="Huke S."/>
            <person name="Camors E."/>
            <person name="Yang Y."/>
            <person name="Picht E."/>
            <person name="Fruen B.R."/>
            <person name="Bers D.M."/>
        </authorList>
    </citation>
    <scope>FUNCTION</scope>
    <scope>INTERACTION WITH FKBP1A AND FKBP1B</scope>
    <scope>PHOSPHORYLATION AT SER-2807</scope>
</reference>
<reference key="11">
    <citation type="journal article" date="2010" name="FEBS Lett.">
        <title>Ryanodine receptor studies using genetically engineered mice.</title>
        <authorList>
            <person name="Kushnir A."/>
            <person name="Betzenhauser M.J."/>
            <person name="Marks A.R."/>
        </authorList>
    </citation>
    <scope>REVIEW</scope>
</reference>
<reference key="12">
    <citation type="journal article" date="2017" name="Sci. Rep.">
        <title>Ryanodine receptors are part of the myospryn complex in cardiac muscle.</title>
        <authorList>
            <person name="Benson M.A."/>
            <person name="Tinsley C.L."/>
            <person name="Waite A.J."/>
            <person name="Carlisle F.A."/>
            <person name="Sweet S.M.M."/>
            <person name="Ehler E."/>
            <person name="George C.H."/>
            <person name="Lai F.A."/>
            <person name="Martin-Rendon E."/>
            <person name="Blake D.J."/>
        </authorList>
    </citation>
    <scope>SUBUNIT</scope>
</reference>
<reference key="13">
    <citation type="journal article" date="2021" name="Sci. Transl. Med.">
        <title>Cardiac ryanodine receptor calcium release deficiency syndrome.</title>
        <authorList>
            <person name="Sun B."/>
            <person name="Yao J."/>
            <person name="Ni M."/>
            <person name="Wei J."/>
            <person name="Zhong X."/>
            <person name="Guo W."/>
            <person name="Zhang L."/>
            <person name="Wang R."/>
            <person name="Belke D."/>
            <person name="Chen Y.X."/>
            <person name="Lieve K.V.V."/>
            <person name="Broendberg A.K."/>
            <person name="Roston T.M."/>
            <person name="Blankoff I."/>
            <person name="Kammeraad J.A."/>
            <person name="von Alvensleben J.C."/>
            <person name="Lazarte J."/>
            <person name="Vallmitjana A."/>
            <person name="Bohne L.J."/>
            <person name="Rose R.A."/>
            <person name="Benitez R."/>
            <person name="Hove-Madsen L."/>
            <person name="Napolitano C."/>
            <person name="Hegele R.A."/>
            <person name="Fill M."/>
            <person name="Sanatani S."/>
            <person name="Wilde A.A.M."/>
            <person name="Roberts J.D."/>
            <person name="Priori S.G."/>
            <person name="Jensen H.K."/>
            <person name="Chen S.R.W."/>
        </authorList>
    </citation>
    <scope>FUNCTION</scope>
    <scope>TRANSPORTER ACTIVITY</scope>
    <scope>MUTAGENESIS OF ASP-4645</scope>
</reference>
<reference key="14">
    <citation type="journal article" date="2009" name="Structure">
        <title>Crystal structures of the N-terminal domains of cardiac and skeletal muscle ryanodine receptors: insights into disease mutations.</title>
        <authorList>
            <person name="Lobo P.A."/>
            <person name="Van Petegem F."/>
        </authorList>
    </citation>
    <scope>X-RAY CRYSTALLOGRAPHY (1.7 ANGSTROMS) OF 1-217</scope>
    <scope>MUTAGENESIS OF ALA-77 AND VAL-186</scope>
</reference>
<reference key="15">
    <citation type="journal article" date="2011" name="Structure">
        <title>The deletion of exon 3 in the cardiac ryanodine receptor is rescued by beta strand switching.</title>
        <authorList>
            <person name="Lobo P.A."/>
            <person name="Kimlicka L."/>
            <person name="Tung C.C."/>
            <person name="Van Petegem F."/>
        </authorList>
    </citation>
    <scope>X-RAY CRYSTALLOGRAPHY (2.3 ANGSTROMS) OF 1-217</scope>
</reference>
<reference evidence="25" key="16">
    <citation type="journal article" date="2012" name="Structure">
        <title>Disease mutations in the ryanodine receptor central region: crystal structures of a phosphorylation hot spot domain.</title>
        <authorList>
            <person name="Yuchi Z."/>
            <person name="Lau K."/>
            <person name="Van Petegem F."/>
        </authorList>
    </citation>
    <scope>X-RAY CRYSTALLOGRAPHY (1.65 ANGSTROMS) OF 2699-2904</scope>
</reference>
<reference evidence="24 26 27 28" key="17">
    <citation type="journal article" date="2013" name="J. Mol. Biol.">
        <title>Type 2 ryanodine receptor domain A contains a unique and dynamic alpha-helix that transitions to a beta-strand in a mutant linked with a heritable cardiomyopathy.</title>
        <authorList>
            <person name="Amador F.J."/>
            <person name="Kimlicka L."/>
            <person name="Stathopulos P.B."/>
            <person name="Gasmi-Seabrook G.M."/>
            <person name="Maclennan D.H."/>
            <person name="Van Petegem F."/>
            <person name="Ikura M."/>
        </authorList>
    </citation>
    <scope>X-RAY CRYSTALLOGRAPHY (2.15 ANGSTROMS) OF 1-217</scope>
    <scope>DISULFIDE BONDS</scope>
</reference>
<reference evidence="29" key="18">
    <citation type="journal article" date="2015" name="Nat. Commun.">
        <title>Crystal structures of ryanodine receptor SPRY1 and tandem-repeat domains reveal a critical FKBP12 binding determinant.</title>
        <authorList>
            <person name="Yuchi Z."/>
            <person name="Yuen S.M."/>
            <person name="Lau K."/>
            <person name="Underhill A.Q."/>
            <person name="Cornea R.L."/>
            <person name="Fessenden J.D."/>
            <person name="Van Petegem F."/>
        </authorList>
    </citation>
    <scope>X-RAY CRYSTALLOGRAPHY (1.21 ANGSTROMS) OF 650-844</scope>
</reference>
<dbReference type="EMBL" id="AF295105">
    <property type="protein sequence ID" value="AAG34081.1"/>
    <property type="molecule type" value="mRNA"/>
</dbReference>
<dbReference type="EMBL" id="AC131329">
    <property type="status" value="NOT_ANNOTATED_CDS"/>
    <property type="molecule type" value="Genomic_DNA"/>
</dbReference>
<dbReference type="EMBL" id="AC159208">
    <property type="status" value="NOT_ANNOTATED_CDS"/>
    <property type="molecule type" value="Genomic_DNA"/>
</dbReference>
<dbReference type="EMBL" id="CT010468">
    <property type="status" value="NOT_ANNOTATED_CDS"/>
    <property type="molecule type" value="Genomic_DNA"/>
</dbReference>
<dbReference type="EMBL" id="CT572985">
    <property type="status" value="NOT_ANNOTATED_CDS"/>
    <property type="molecule type" value="Genomic_DNA"/>
</dbReference>
<dbReference type="EMBL" id="AB012003">
    <property type="protein sequence ID" value="BAA25137.1"/>
    <property type="molecule type" value="Genomic_DNA"/>
</dbReference>
<dbReference type="EMBL" id="X83933">
    <property type="protein sequence ID" value="CAA58785.1"/>
    <property type="molecule type" value="mRNA"/>
</dbReference>
<dbReference type="EMBL" id="D38217">
    <property type="protein sequence ID" value="BAA07392.1"/>
    <property type="molecule type" value="mRNA"/>
</dbReference>
<dbReference type="CCDS" id="CCDS49206.1"/>
<dbReference type="PIR" id="I48742">
    <property type="entry name" value="I48742"/>
</dbReference>
<dbReference type="RefSeq" id="NP_076357.2">
    <property type="nucleotide sequence ID" value="NM_023868.2"/>
</dbReference>
<dbReference type="PDB" id="2MC2">
    <property type="method" value="NMR"/>
    <property type="chains" value="A=10-224"/>
</dbReference>
<dbReference type="PDB" id="3IM5">
    <property type="method" value="X-ray"/>
    <property type="resolution" value="2.55 A"/>
    <property type="chains" value="A/B=1-217"/>
</dbReference>
<dbReference type="PDB" id="3IM6">
    <property type="method" value="X-ray"/>
    <property type="resolution" value="1.70 A"/>
    <property type="chains" value="A=1-217"/>
</dbReference>
<dbReference type="PDB" id="3IM7">
    <property type="method" value="X-ray"/>
    <property type="resolution" value="2.21 A"/>
    <property type="chains" value="A=1-217"/>
</dbReference>
<dbReference type="PDB" id="3QR5">
    <property type="method" value="X-ray"/>
    <property type="resolution" value="2.30 A"/>
    <property type="chains" value="A/B=1-217"/>
</dbReference>
<dbReference type="PDB" id="4ETV">
    <property type="method" value="X-ray"/>
    <property type="resolution" value="1.65 A"/>
    <property type="chains" value="A/B=2699-2904"/>
</dbReference>
<dbReference type="PDB" id="4KEI">
    <property type="method" value="X-ray"/>
    <property type="resolution" value="2.41 A"/>
    <property type="chains" value="A=1-217"/>
</dbReference>
<dbReference type="PDB" id="4KEJ">
    <property type="method" value="X-ray"/>
    <property type="resolution" value="2.55 A"/>
    <property type="chains" value="A=1-217"/>
</dbReference>
<dbReference type="PDB" id="4KEK">
    <property type="method" value="X-ray"/>
    <property type="resolution" value="2.15 A"/>
    <property type="chains" value="A=1-217"/>
</dbReference>
<dbReference type="PDB" id="4L4H">
    <property type="method" value="X-ray"/>
    <property type="resolution" value="2.00 A"/>
    <property type="chains" value="A=1-547"/>
</dbReference>
<dbReference type="PDB" id="4L4I">
    <property type="method" value="X-ray"/>
    <property type="resolution" value="2.15 A"/>
    <property type="chains" value="A=1-547"/>
</dbReference>
<dbReference type="PDB" id="4P9I">
    <property type="method" value="X-ray"/>
    <property type="resolution" value="1.34 A"/>
    <property type="chains" value="A=1080-1253"/>
</dbReference>
<dbReference type="PDB" id="4P9L">
    <property type="method" value="X-ray"/>
    <property type="resolution" value="1.44 A"/>
    <property type="chains" value="A=1080-1253"/>
</dbReference>
<dbReference type="PDB" id="5C33">
    <property type="method" value="X-ray"/>
    <property type="resolution" value="1.21 A"/>
    <property type="chains" value="A/B=650-844"/>
</dbReference>
<dbReference type="PDB" id="5VSN">
    <property type="method" value="X-ray"/>
    <property type="resolution" value="1.44 A"/>
    <property type="chains" value="A=1084-1252"/>
</dbReference>
<dbReference type="PDB" id="6J6L">
    <property type="method" value="X-ray"/>
    <property type="resolution" value="1.45 A"/>
    <property type="chains" value="A/B=650-844"/>
</dbReference>
<dbReference type="PDB" id="6MM5">
    <property type="method" value="X-ray"/>
    <property type="resolution" value="1.95 A"/>
    <property type="chains" value="C=2799-2810"/>
</dbReference>
<dbReference type="PDB" id="6MM6">
    <property type="method" value="X-ray"/>
    <property type="resolution" value="2.39 A"/>
    <property type="chains" value="D/F=2699-2904"/>
</dbReference>
<dbReference type="PDB" id="6MM7">
    <property type="method" value="X-ray"/>
    <property type="resolution" value="1.85 A"/>
    <property type="chains" value="C/E=2699-2904"/>
</dbReference>
<dbReference type="PDB" id="6MM8">
    <property type="method" value="X-ray"/>
    <property type="resolution" value="1.85 A"/>
    <property type="chains" value="D=2699-2904"/>
</dbReference>
<dbReference type="PDB" id="6WOU">
    <property type="method" value="EM"/>
    <property type="resolution" value="3.27 A"/>
    <property type="chains" value="A/B/C/D=1-4966"/>
</dbReference>
<dbReference type="PDB" id="6WOV">
    <property type="method" value="EM"/>
    <property type="resolution" value="5.10 A"/>
    <property type="chains" value="A/B/C/D=1-4966"/>
</dbReference>
<dbReference type="PDB" id="7VML">
    <property type="method" value="EM"/>
    <property type="resolution" value="3.30 A"/>
    <property type="chains" value="A/B/C/D=1-4966"/>
</dbReference>
<dbReference type="PDB" id="7VMM">
    <property type="method" value="EM"/>
    <property type="resolution" value="3.50 A"/>
    <property type="chains" value="A/B/C/D=1-4966"/>
</dbReference>
<dbReference type="PDB" id="7VMN">
    <property type="method" value="EM"/>
    <property type="resolution" value="3.50 A"/>
    <property type="chains" value="A/B/C/D=1-4966"/>
</dbReference>
<dbReference type="PDB" id="7VMO">
    <property type="method" value="EM"/>
    <property type="resolution" value="3.50 A"/>
    <property type="chains" value="A/B/C/D=1-4966"/>
</dbReference>
<dbReference type="PDB" id="7VMP">
    <property type="method" value="EM"/>
    <property type="resolution" value="3.50 A"/>
    <property type="chains" value="A/B/C/D=1-4966"/>
</dbReference>
<dbReference type="PDB" id="7VMQ">
    <property type="method" value="EM"/>
    <property type="resolution" value="3.70 A"/>
    <property type="chains" value="A/B/C/D=1-4966"/>
</dbReference>
<dbReference type="PDB" id="7VMR">
    <property type="method" value="EM"/>
    <property type="resolution" value="3.30 A"/>
    <property type="chains" value="A/B/C/D=1-4966"/>
</dbReference>
<dbReference type="PDB" id="7VMS">
    <property type="method" value="EM"/>
    <property type="resolution" value="3.80 A"/>
    <property type="chains" value="A/B/C/D=1-4966"/>
</dbReference>
<dbReference type="PDB" id="8DTY">
    <property type="method" value="EM"/>
    <property type="resolution" value="3.50 A"/>
    <property type="chains" value="A/B/C/D=1-4966"/>
</dbReference>
<dbReference type="PDB" id="8DTZ">
    <property type="method" value="EM"/>
    <property type="resolution" value="3.60 A"/>
    <property type="chains" value="A/B/C/D=1-4966"/>
</dbReference>
<dbReference type="PDB" id="8DVV">
    <property type="method" value="EM"/>
    <property type="resolution" value="3.68 A"/>
    <property type="chains" value="A/B/C/D=1-4966"/>
</dbReference>
<dbReference type="PDB" id="8RRS">
    <property type="method" value="EM"/>
    <property type="resolution" value="3.40 A"/>
    <property type="chains" value="A/C/E/F=1-4966"/>
</dbReference>
<dbReference type="PDBsum" id="2MC2"/>
<dbReference type="PDBsum" id="3IM5"/>
<dbReference type="PDBsum" id="3IM6"/>
<dbReference type="PDBsum" id="3IM7"/>
<dbReference type="PDBsum" id="3QR5"/>
<dbReference type="PDBsum" id="4ETV"/>
<dbReference type="PDBsum" id="4KEI"/>
<dbReference type="PDBsum" id="4KEJ"/>
<dbReference type="PDBsum" id="4KEK"/>
<dbReference type="PDBsum" id="4L4H"/>
<dbReference type="PDBsum" id="4L4I"/>
<dbReference type="PDBsum" id="4P9I"/>
<dbReference type="PDBsum" id="4P9L"/>
<dbReference type="PDBsum" id="5C33"/>
<dbReference type="PDBsum" id="5VSN"/>
<dbReference type="PDBsum" id="6J6L"/>
<dbReference type="PDBsum" id="6MM5"/>
<dbReference type="PDBsum" id="6MM6"/>
<dbReference type="PDBsum" id="6MM7"/>
<dbReference type="PDBsum" id="6MM8"/>
<dbReference type="PDBsum" id="6WOU"/>
<dbReference type="PDBsum" id="6WOV"/>
<dbReference type="PDBsum" id="7VML"/>
<dbReference type="PDBsum" id="7VMM"/>
<dbReference type="PDBsum" id="7VMN"/>
<dbReference type="PDBsum" id="7VMO"/>
<dbReference type="PDBsum" id="7VMP"/>
<dbReference type="PDBsum" id="7VMQ"/>
<dbReference type="PDBsum" id="7VMR"/>
<dbReference type="PDBsum" id="7VMS"/>
<dbReference type="PDBsum" id="8DTY"/>
<dbReference type="PDBsum" id="8DTZ"/>
<dbReference type="PDBsum" id="8DVV"/>
<dbReference type="PDBsum" id="8RRS"/>
<dbReference type="BMRB" id="E9Q401"/>
<dbReference type="EMDB" id="EMD-19463"/>
<dbReference type="EMDB" id="EMD-21861"/>
<dbReference type="EMDB" id="EMD-21862"/>
<dbReference type="EMDB" id="EMD-27711"/>
<dbReference type="EMDB" id="EMD-27712"/>
<dbReference type="EMDB" id="EMD-27746"/>
<dbReference type="EMDB" id="EMD-32036"/>
<dbReference type="EMDB" id="EMD-32037"/>
<dbReference type="SMR" id="E9Q401"/>
<dbReference type="BioGRID" id="203046">
    <property type="interactions" value="24"/>
</dbReference>
<dbReference type="ComplexPortal" id="CPX-3137">
    <property type="entry name" value="Ryanodine 2 complex"/>
</dbReference>
<dbReference type="FunCoup" id="E9Q401">
    <property type="interactions" value="1120"/>
</dbReference>
<dbReference type="IntAct" id="E9Q401">
    <property type="interactions" value="66"/>
</dbReference>
<dbReference type="MINT" id="E9Q401"/>
<dbReference type="STRING" id="10090.ENSMUSP00000021750"/>
<dbReference type="BindingDB" id="E9Q401"/>
<dbReference type="ChEMBL" id="CHEMBL4745"/>
<dbReference type="MoonDB" id="E9Q401">
    <property type="type" value="Predicted"/>
</dbReference>
<dbReference type="GlyGen" id="E9Q401">
    <property type="glycosylation" value="7 sites, 3 N-linked glycans (3 sites), 1 O-linked glycan (1 site)"/>
</dbReference>
<dbReference type="iPTMnet" id="E9Q401"/>
<dbReference type="PhosphoSitePlus" id="E9Q401"/>
<dbReference type="SwissPalm" id="E9Q401"/>
<dbReference type="jPOST" id="E9Q401"/>
<dbReference type="PaxDb" id="10090-ENSMUSP00000021750"/>
<dbReference type="PeptideAtlas" id="E9Q401"/>
<dbReference type="ProteomicsDB" id="260963"/>
<dbReference type="Antibodypedia" id="3476">
    <property type="antibodies" value="255 antibodies from 32 providers"/>
</dbReference>
<dbReference type="DNASU" id="20191"/>
<dbReference type="Ensembl" id="ENSMUST00000021750.15">
    <property type="protein sequence ID" value="ENSMUSP00000021750.8"/>
    <property type="gene ID" value="ENSMUSG00000021313.18"/>
</dbReference>
<dbReference type="GeneID" id="20191"/>
<dbReference type="KEGG" id="mmu:20191"/>
<dbReference type="UCSC" id="uc007pld.1">
    <property type="organism name" value="mouse"/>
</dbReference>
<dbReference type="AGR" id="MGI:99685"/>
<dbReference type="CTD" id="6262"/>
<dbReference type="MGI" id="MGI:99685">
    <property type="gene designation" value="Ryr2"/>
</dbReference>
<dbReference type="VEuPathDB" id="HostDB:ENSMUSG00000021313"/>
<dbReference type="eggNOG" id="KOG2243">
    <property type="taxonomic scope" value="Eukaryota"/>
</dbReference>
<dbReference type="GeneTree" id="ENSGT00940000154906"/>
<dbReference type="HOGENOM" id="CLU_000040_2_0_1"/>
<dbReference type="InParanoid" id="E9Q401"/>
<dbReference type="OMA" id="HYEDTSD"/>
<dbReference type="OrthoDB" id="258495at2759"/>
<dbReference type="PhylomeDB" id="E9Q401"/>
<dbReference type="TreeFam" id="TF315244"/>
<dbReference type="Reactome" id="R-MMU-2672351">
    <property type="pathway name" value="Stimuli-sensing channels"/>
</dbReference>
<dbReference type="Reactome" id="R-MMU-5578775">
    <property type="pathway name" value="Ion homeostasis"/>
</dbReference>
<dbReference type="BioGRID-ORCS" id="20191">
    <property type="hits" value="3 hits in 78 CRISPR screens"/>
</dbReference>
<dbReference type="ChiTaRS" id="Ryr2">
    <property type="organism name" value="mouse"/>
</dbReference>
<dbReference type="EvolutionaryTrace" id="E9Q401"/>
<dbReference type="PRO" id="PR:E9Q401"/>
<dbReference type="Proteomes" id="UP000000589">
    <property type="component" value="Chromosome 13"/>
</dbReference>
<dbReference type="RNAct" id="E9Q401">
    <property type="molecule type" value="protein"/>
</dbReference>
<dbReference type="Bgee" id="ENSMUSG00000021313">
    <property type="expression patterns" value="Expressed in myocardium of ventricle and 146 other cell types or tissues"/>
</dbReference>
<dbReference type="ExpressionAtlas" id="E9Q401">
    <property type="expression patterns" value="baseline and differential"/>
</dbReference>
<dbReference type="GO" id="GO:0034704">
    <property type="term" value="C:calcium channel complex"/>
    <property type="evidence" value="ECO:0000314"/>
    <property type="project" value="BHF-UCL"/>
</dbReference>
<dbReference type="GO" id="GO:0016020">
    <property type="term" value="C:membrane"/>
    <property type="evidence" value="ECO:0000314"/>
    <property type="project" value="MGI"/>
</dbReference>
<dbReference type="GO" id="GO:0032991">
    <property type="term" value="C:protein-containing complex"/>
    <property type="evidence" value="ECO:0000266"/>
    <property type="project" value="MGI"/>
</dbReference>
<dbReference type="GO" id="GO:0030017">
    <property type="term" value="C:sarcomere"/>
    <property type="evidence" value="ECO:0000314"/>
    <property type="project" value="BHF-UCL"/>
</dbReference>
<dbReference type="GO" id="GO:0016529">
    <property type="term" value="C:sarcoplasmic reticulum"/>
    <property type="evidence" value="ECO:0000314"/>
    <property type="project" value="BHF-UCL"/>
</dbReference>
<dbReference type="GO" id="GO:0033017">
    <property type="term" value="C:sarcoplasmic reticulum membrane"/>
    <property type="evidence" value="ECO:0000314"/>
    <property type="project" value="MGI"/>
</dbReference>
<dbReference type="GO" id="GO:0005790">
    <property type="term" value="C:smooth endoplasmic reticulum"/>
    <property type="evidence" value="ECO:0000314"/>
    <property type="project" value="MGI"/>
</dbReference>
<dbReference type="GO" id="GO:0030018">
    <property type="term" value="C:Z disc"/>
    <property type="evidence" value="ECO:0000314"/>
    <property type="project" value="MGI"/>
</dbReference>
<dbReference type="GO" id="GO:0005262">
    <property type="term" value="F:calcium channel activity"/>
    <property type="evidence" value="ECO:0000314"/>
    <property type="project" value="UniProtKB"/>
</dbReference>
<dbReference type="GO" id="GO:0005509">
    <property type="term" value="F:calcium ion binding"/>
    <property type="evidence" value="ECO:0007669"/>
    <property type="project" value="InterPro"/>
</dbReference>
<dbReference type="GO" id="GO:0005516">
    <property type="term" value="F:calmodulin binding"/>
    <property type="evidence" value="ECO:0000314"/>
    <property type="project" value="MGI"/>
</dbReference>
<dbReference type="GO" id="GO:0019899">
    <property type="term" value="F:enzyme binding"/>
    <property type="evidence" value="ECO:0000353"/>
    <property type="project" value="BHF-UCL"/>
</dbReference>
<dbReference type="GO" id="GO:0042802">
    <property type="term" value="F:identical protein binding"/>
    <property type="evidence" value="ECO:0000353"/>
    <property type="project" value="IntAct"/>
</dbReference>
<dbReference type="GO" id="GO:0015278">
    <property type="term" value="F:intracellularly gated calcium channel activity"/>
    <property type="evidence" value="ECO:0000314"/>
    <property type="project" value="UniProtKB"/>
</dbReference>
<dbReference type="GO" id="GO:0034236">
    <property type="term" value="F:protein kinase A catalytic subunit binding"/>
    <property type="evidence" value="ECO:0007669"/>
    <property type="project" value="Ensembl"/>
</dbReference>
<dbReference type="GO" id="GO:0034237">
    <property type="term" value="F:protein kinase A regulatory subunit binding"/>
    <property type="evidence" value="ECO:0007669"/>
    <property type="project" value="Ensembl"/>
</dbReference>
<dbReference type="GO" id="GO:0019901">
    <property type="term" value="F:protein kinase binding"/>
    <property type="evidence" value="ECO:0000353"/>
    <property type="project" value="BHF-UCL"/>
</dbReference>
<dbReference type="GO" id="GO:0005219">
    <property type="term" value="F:ryanodine-sensitive calcium-release channel activity"/>
    <property type="evidence" value="ECO:0000314"/>
    <property type="project" value="MGI"/>
</dbReference>
<dbReference type="GO" id="GO:0043924">
    <property type="term" value="F:suramin binding"/>
    <property type="evidence" value="ECO:0007669"/>
    <property type="project" value="Ensembl"/>
</dbReference>
<dbReference type="GO" id="GO:0097553">
    <property type="term" value="P:calcium ion transmembrane import into cytosol"/>
    <property type="evidence" value="ECO:0000315"/>
    <property type="project" value="MGI"/>
</dbReference>
<dbReference type="GO" id="GO:0070588">
    <property type="term" value="P:calcium ion transmembrane transport"/>
    <property type="evidence" value="ECO:0000315"/>
    <property type="project" value="MGI"/>
</dbReference>
<dbReference type="GO" id="GO:0006816">
    <property type="term" value="P:calcium ion transport"/>
    <property type="evidence" value="ECO:0000314"/>
    <property type="project" value="UniProtKB"/>
</dbReference>
<dbReference type="GO" id="GO:0060402">
    <property type="term" value="P:calcium ion transport into cytosol"/>
    <property type="evidence" value="ECO:0007669"/>
    <property type="project" value="Ensembl"/>
</dbReference>
<dbReference type="GO" id="GO:0019722">
    <property type="term" value="P:calcium-mediated signaling"/>
    <property type="evidence" value="ECO:0000315"/>
    <property type="project" value="UniProtKB"/>
</dbReference>
<dbReference type="GO" id="GO:0003300">
    <property type="term" value="P:cardiac muscle hypertrophy"/>
    <property type="evidence" value="ECO:0000315"/>
    <property type="project" value="MGI"/>
</dbReference>
<dbReference type="GO" id="GO:0071313">
    <property type="term" value="P:cellular response to caffeine"/>
    <property type="evidence" value="ECO:0000314"/>
    <property type="project" value="UniProtKB"/>
</dbReference>
<dbReference type="GO" id="GO:0071872">
    <property type="term" value="P:cellular response to epinephrine stimulus"/>
    <property type="evidence" value="ECO:0000315"/>
    <property type="project" value="BHF-UCL"/>
</dbReference>
<dbReference type="GO" id="GO:0005513">
    <property type="term" value="P:detection of calcium ion"/>
    <property type="evidence" value="ECO:0007669"/>
    <property type="project" value="Ensembl"/>
</dbReference>
<dbReference type="GO" id="GO:0003143">
    <property type="term" value="P:embryonic heart tube morphogenesis"/>
    <property type="evidence" value="ECO:0000315"/>
    <property type="project" value="UniProtKB"/>
</dbReference>
<dbReference type="GO" id="GO:0051649">
    <property type="term" value="P:establishment of localization in cell"/>
    <property type="evidence" value="ECO:0000315"/>
    <property type="project" value="MGI"/>
</dbReference>
<dbReference type="GO" id="GO:0072599">
    <property type="term" value="P:establishment of protein localization to endoplasmic reticulum"/>
    <property type="evidence" value="ECO:0007669"/>
    <property type="project" value="Ensembl"/>
</dbReference>
<dbReference type="GO" id="GO:0006874">
    <property type="term" value="P:intracellular calcium ion homeostasis"/>
    <property type="evidence" value="ECO:0000315"/>
    <property type="project" value="UniProtKB"/>
</dbReference>
<dbReference type="GO" id="GO:0003220">
    <property type="term" value="P:left ventricular cardiac muscle tissue morphogenesis"/>
    <property type="evidence" value="ECO:0000315"/>
    <property type="project" value="MGI"/>
</dbReference>
<dbReference type="GO" id="GO:0010460">
    <property type="term" value="P:positive regulation of heart rate"/>
    <property type="evidence" value="ECO:0000315"/>
    <property type="project" value="MGI"/>
</dbReference>
<dbReference type="GO" id="GO:0051284">
    <property type="term" value="P:positive regulation of sequestering of calcium ion"/>
    <property type="evidence" value="ECO:0007669"/>
    <property type="project" value="Ensembl"/>
</dbReference>
<dbReference type="GO" id="GO:0098735">
    <property type="term" value="P:positive regulation of the force of heart contraction"/>
    <property type="evidence" value="ECO:0007669"/>
    <property type="project" value="Ensembl"/>
</dbReference>
<dbReference type="GO" id="GO:0086029">
    <property type="term" value="P:Purkinje myocyte to ventricular cardiac muscle cell signaling"/>
    <property type="evidence" value="ECO:0000315"/>
    <property type="project" value="BHF-UCL"/>
</dbReference>
<dbReference type="GO" id="GO:0098910">
    <property type="term" value="P:regulation of atrial cardiac muscle cell action potential"/>
    <property type="evidence" value="ECO:0007669"/>
    <property type="project" value="Ensembl"/>
</dbReference>
<dbReference type="GO" id="GO:0098904">
    <property type="term" value="P:regulation of AV node cell action potential"/>
    <property type="evidence" value="ECO:0007669"/>
    <property type="project" value="Ensembl"/>
</dbReference>
<dbReference type="GO" id="GO:0010881">
    <property type="term" value="P:regulation of cardiac muscle contraction by regulation of the release of sequestered calcium ion"/>
    <property type="evidence" value="ECO:0000316"/>
    <property type="project" value="BHF-UCL"/>
</dbReference>
<dbReference type="GO" id="GO:0002027">
    <property type="term" value="P:regulation of heart rate"/>
    <property type="evidence" value="ECO:0000315"/>
    <property type="project" value="BHF-UCL"/>
</dbReference>
<dbReference type="GO" id="GO:0098907">
    <property type="term" value="P:regulation of SA node cell action potential"/>
    <property type="evidence" value="ECO:0007669"/>
    <property type="project" value="Ensembl"/>
</dbReference>
<dbReference type="GO" id="GO:0098911">
    <property type="term" value="P:regulation of ventricular cardiac muscle cell action potential"/>
    <property type="evidence" value="ECO:0007669"/>
    <property type="project" value="Ensembl"/>
</dbReference>
<dbReference type="GO" id="GO:0014808">
    <property type="term" value="P:release of sequestered calcium ion into cytosol by sarcoplasmic reticulum"/>
    <property type="evidence" value="ECO:0000314"/>
    <property type="project" value="BHF-UCL"/>
</dbReference>
<dbReference type="GO" id="GO:0031000">
    <property type="term" value="P:response to caffeine"/>
    <property type="evidence" value="ECO:0000314"/>
    <property type="project" value="UniProtKB"/>
</dbReference>
<dbReference type="GO" id="GO:0001666">
    <property type="term" value="P:response to hypoxia"/>
    <property type="evidence" value="ECO:0000314"/>
    <property type="project" value="BHF-UCL"/>
</dbReference>
<dbReference type="GO" id="GO:0014850">
    <property type="term" value="P:response to muscle activity"/>
    <property type="evidence" value="ECO:0007669"/>
    <property type="project" value="Ensembl"/>
</dbReference>
<dbReference type="GO" id="GO:0035994">
    <property type="term" value="P:response to muscle stretch"/>
    <property type="evidence" value="ECO:0007669"/>
    <property type="project" value="Ensembl"/>
</dbReference>
<dbReference type="GO" id="GO:0051775">
    <property type="term" value="P:response to redox state"/>
    <property type="evidence" value="ECO:0007669"/>
    <property type="project" value="Ensembl"/>
</dbReference>
<dbReference type="GO" id="GO:0097050">
    <property type="term" value="P:type B pancreatic cell apoptotic process"/>
    <property type="evidence" value="ECO:0000315"/>
    <property type="project" value="BHF-UCL"/>
</dbReference>
<dbReference type="GO" id="GO:0086005">
    <property type="term" value="P:ventricular cardiac muscle cell action potential"/>
    <property type="evidence" value="ECO:0000315"/>
    <property type="project" value="BHF-UCL"/>
</dbReference>
<dbReference type="CDD" id="cd23291">
    <property type="entry name" value="beta-trefoil_MIR_RyR2"/>
    <property type="match status" value="1"/>
</dbReference>
<dbReference type="CDD" id="cd12877">
    <property type="entry name" value="SPRY1_RyR"/>
    <property type="match status" value="1"/>
</dbReference>
<dbReference type="CDD" id="cd12878">
    <property type="entry name" value="SPRY2_RyR"/>
    <property type="match status" value="1"/>
</dbReference>
<dbReference type="CDD" id="cd12879">
    <property type="entry name" value="SPRY3_RyR"/>
    <property type="match status" value="1"/>
</dbReference>
<dbReference type="FunFam" id="1.10.238.10:FF:000040">
    <property type="entry name" value="Ryanodine receptor 2"/>
    <property type="match status" value="1"/>
</dbReference>
<dbReference type="FunFam" id="1.10.490.160:FF:000005">
    <property type="entry name" value="Ryanodine receptor 2"/>
    <property type="match status" value="1"/>
</dbReference>
<dbReference type="FunFam" id="1.10.490.160:FF:000001">
    <property type="entry name" value="Ryanodine receptor 2 (Cardiac)"/>
    <property type="match status" value="1"/>
</dbReference>
<dbReference type="FunFam" id="2.60.120.920:FF:000012">
    <property type="entry name" value="Ryanodine receptor 2 (Cardiac)"/>
    <property type="match status" value="1"/>
</dbReference>
<dbReference type="FunFam" id="2.80.10.50:FF:000006">
    <property type="entry name" value="Ryanodine receptor 2 (Cardiac)"/>
    <property type="match status" value="1"/>
</dbReference>
<dbReference type="FunFam" id="2.80.10.50:FF:000016">
    <property type="entry name" value="Ryanodine receptor 2 (Cardiac)"/>
    <property type="match status" value="1"/>
</dbReference>
<dbReference type="FunFam" id="1.10.287.70:FF:000017">
    <property type="entry name" value="ryanodine receptor isoform X2"/>
    <property type="match status" value="1"/>
</dbReference>
<dbReference type="FunFam" id="1.25.10.30:FF:000002">
    <property type="entry name" value="ryanodine receptor isoform X2"/>
    <property type="match status" value="1"/>
</dbReference>
<dbReference type="FunFam" id="2.60.120.920:FF:000002">
    <property type="entry name" value="ryanodine receptor isoform X2"/>
    <property type="match status" value="1"/>
</dbReference>
<dbReference type="FunFam" id="2.60.120.920:FF:000003">
    <property type="entry name" value="ryanodine receptor isoform X2"/>
    <property type="match status" value="1"/>
</dbReference>
<dbReference type="Gene3D" id="1.10.287.70">
    <property type="match status" value="1"/>
</dbReference>
<dbReference type="Gene3D" id="1.10.490.160">
    <property type="match status" value="3"/>
</dbReference>
<dbReference type="Gene3D" id="2.60.120.920">
    <property type="match status" value="3"/>
</dbReference>
<dbReference type="Gene3D" id="2.80.10.50">
    <property type="match status" value="2"/>
</dbReference>
<dbReference type="Gene3D" id="1.10.238.10">
    <property type="entry name" value="EF-hand"/>
    <property type="match status" value="1"/>
</dbReference>
<dbReference type="Gene3D" id="1.25.10.30">
    <property type="entry name" value="IP3 receptor type 1 binding core, RIH domain"/>
    <property type="match status" value="1"/>
</dbReference>
<dbReference type="InterPro" id="IPR001870">
    <property type="entry name" value="B30.2/SPRY"/>
</dbReference>
<dbReference type="InterPro" id="IPR043136">
    <property type="entry name" value="B30.2/SPRY_sf"/>
</dbReference>
<dbReference type="InterPro" id="IPR013320">
    <property type="entry name" value="ConA-like_dom_sf"/>
</dbReference>
<dbReference type="InterPro" id="IPR011992">
    <property type="entry name" value="EF-hand-dom_pair"/>
</dbReference>
<dbReference type="InterPro" id="IPR002048">
    <property type="entry name" value="EF_hand_dom"/>
</dbReference>
<dbReference type="InterPro" id="IPR014821">
    <property type="entry name" value="Ins145_P3_rcpt"/>
</dbReference>
<dbReference type="InterPro" id="IPR005821">
    <property type="entry name" value="Ion_trans_dom"/>
</dbReference>
<dbReference type="InterPro" id="IPR036300">
    <property type="entry name" value="MIR_dom_sf"/>
</dbReference>
<dbReference type="InterPro" id="IPR016093">
    <property type="entry name" value="MIR_motif"/>
</dbReference>
<dbReference type="InterPro" id="IPR013662">
    <property type="entry name" value="RIH_assoc-dom"/>
</dbReference>
<dbReference type="InterPro" id="IPR000699">
    <property type="entry name" value="RIH_dom"/>
</dbReference>
<dbReference type="InterPro" id="IPR013333">
    <property type="entry name" value="Ryan_recept"/>
</dbReference>
<dbReference type="InterPro" id="IPR015925">
    <property type="entry name" value="Ryanodine_IP3_receptor"/>
</dbReference>
<dbReference type="InterPro" id="IPR003032">
    <property type="entry name" value="Ryanodine_rcpt"/>
</dbReference>
<dbReference type="InterPro" id="IPR009460">
    <property type="entry name" value="Ryanrecept_TM4-6"/>
</dbReference>
<dbReference type="InterPro" id="IPR048581">
    <property type="entry name" value="RYDR_Jsol"/>
</dbReference>
<dbReference type="InterPro" id="IPR035910">
    <property type="entry name" value="RyR/IP3R_RIH_dom_sf"/>
</dbReference>
<dbReference type="InterPro" id="IPR035761">
    <property type="entry name" value="SPRY1_RyR"/>
</dbReference>
<dbReference type="InterPro" id="IPR035764">
    <property type="entry name" value="SPRY2_RyR"/>
</dbReference>
<dbReference type="InterPro" id="IPR035762">
    <property type="entry name" value="SPRY3_RyR"/>
</dbReference>
<dbReference type="InterPro" id="IPR003877">
    <property type="entry name" value="SPRY_dom"/>
</dbReference>
<dbReference type="PANTHER" id="PTHR46399">
    <property type="entry name" value="B30.2/SPRY DOMAIN-CONTAINING PROTEIN"/>
    <property type="match status" value="1"/>
</dbReference>
<dbReference type="PANTHER" id="PTHR46399:SF7">
    <property type="entry name" value="RYANODINE RECEPTOR 2"/>
    <property type="match status" value="1"/>
</dbReference>
<dbReference type="Pfam" id="PF13499">
    <property type="entry name" value="EF-hand_7"/>
    <property type="match status" value="1"/>
</dbReference>
<dbReference type="Pfam" id="PF08709">
    <property type="entry name" value="Ins145_P3_rec"/>
    <property type="match status" value="1"/>
</dbReference>
<dbReference type="Pfam" id="PF00520">
    <property type="entry name" value="Ion_trans"/>
    <property type="match status" value="1"/>
</dbReference>
<dbReference type="Pfam" id="PF02815">
    <property type="entry name" value="MIR"/>
    <property type="match status" value="1"/>
</dbReference>
<dbReference type="Pfam" id="PF08454">
    <property type="entry name" value="RIH_assoc"/>
    <property type="match status" value="1"/>
</dbReference>
<dbReference type="Pfam" id="PF06459">
    <property type="entry name" value="RR_TM4-6"/>
    <property type="match status" value="1"/>
</dbReference>
<dbReference type="Pfam" id="PF01365">
    <property type="entry name" value="RYDR_ITPR"/>
    <property type="match status" value="2"/>
</dbReference>
<dbReference type="Pfam" id="PF21119">
    <property type="entry name" value="RYDR_Jsol"/>
    <property type="match status" value="1"/>
</dbReference>
<dbReference type="Pfam" id="PF02026">
    <property type="entry name" value="RyR"/>
    <property type="match status" value="4"/>
</dbReference>
<dbReference type="Pfam" id="PF00622">
    <property type="entry name" value="SPRY"/>
    <property type="match status" value="3"/>
</dbReference>
<dbReference type="PRINTS" id="PR00795">
    <property type="entry name" value="RYANODINER"/>
</dbReference>
<dbReference type="SMART" id="SM00472">
    <property type="entry name" value="MIR"/>
    <property type="match status" value="4"/>
</dbReference>
<dbReference type="SMART" id="SM00449">
    <property type="entry name" value="SPRY"/>
    <property type="match status" value="3"/>
</dbReference>
<dbReference type="SUPFAM" id="SSF49899">
    <property type="entry name" value="Concanavalin A-like lectins/glucanases"/>
    <property type="match status" value="2"/>
</dbReference>
<dbReference type="SUPFAM" id="SSF47473">
    <property type="entry name" value="EF-hand"/>
    <property type="match status" value="1"/>
</dbReference>
<dbReference type="SUPFAM" id="SSF100909">
    <property type="entry name" value="IP3 receptor type 1 binding core, domain 2"/>
    <property type="match status" value="2"/>
</dbReference>
<dbReference type="SUPFAM" id="SSF82109">
    <property type="entry name" value="MIR domain"/>
    <property type="match status" value="2"/>
</dbReference>
<dbReference type="PROSITE" id="PS50188">
    <property type="entry name" value="B302_SPRY"/>
    <property type="match status" value="3"/>
</dbReference>
<dbReference type="PROSITE" id="PS50919">
    <property type="entry name" value="MIR"/>
    <property type="match status" value="5"/>
</dbReference>
<organism>
    <name type="scientific">Mus musculus</name>
    <name type="common">Mouse</name>
    <dbReference type="NCBI Taxonomy" id="10090"/>
    <lineage>
        <taxon>Eukaryota</taxon>
        <taxon>Metazoa</taxon>
        <taxon>Chordata</taxon>
        <taxon>Craniata</taxon>
        <taxon>Vertebrata</taxon>
        <taxon>Euteleostomi</taxon>
        <taxon>Mammalia</taxon>
        <taxon>Eutheria</taxon>
        <taxon>Euarchontoglires</taxon>
        <taxon>Glires</taxon>
        <taxon>Rodentia</taxon>
        <taxon>Myomorpha</taxon>
        <taxon>Muroidea</taxon>
        <taxon>Muridae</taxon>
        <taxon>Murinae</taxon>
        <taxon>Mus</taxon>
        <taxon>Mus</taxon>
    </lineage>
</organism>
<sequence>MADAGEGEDEIQFLRTDDEVVLQCTATIHKEQQKLCLAAEGFGNRLCFLESTSNSKNVPPDLSICTFVLEQSLSVRALQEMLANTVEKSEGQVDVEKWKFMMKTAQGGGHRTLLYGHAILLRHSYSGMYLCCLSTSRSSTDKLAFDVGLQEDTTGEACWWTIHPASKQRSEGEKVRVGDDLILVSVSSERYLHLSYGNSSWHVDAAFQQTLWSVAPISSGSEAAQGYLIGGDVLRLLHGHMDECLTVPSGEHGEEQRRTVHYEGGAVSVHARSLWRLETLRVAWSGSHIRWGQPFRLRHVTTGKYLSLMEDKNLLLMDKEKADVKSTAFAFRSSKEKLDVGVRKEVDGMGTSEIKYGDSICYIQHVDTGLWLTYQAVDVKSARMGSIQRKAIMHHEGHMDDGLNLSRSQHEESRTARVIRSTVFLFNRFIRGLDALSKKVKLPTIDLPIESVSLSLQDLIGYFHPPDEHLEHEDKQNRLRALKNRQNLFQEEGMINLVLECIDRLHVYSSAAHFADVAGREAGESWKSILNSLYELLAALIRGNRKNCAQFSGSLDWLISRLERLEASSGILEVLHCVLVESPEALNIIKEGHIKSIISLLDKHGRNHKVLDVLCSLCVCHGVAVRSNQHLICDNLLPGRDLLLQTRLVNHVSSMRPNIFLGVSEGSAQYKKWYYELMVDHTEPFVTAEATHLRVGWASTEGYSPYPGGGEEWGGNGVGDDLFSYGFDGLHLWSGCIARTVSSPNQHLLRTDDVISCCLDLSAPSISFRINGQPVQGMFENFNIDGLFFPVVSFSAGIKVRFLLGGRHGEFKFLPPPGYAACYEAVLPKEKLKVEHSREYKQERTYTRDLLGPTVSLTQAAFTPVPVDTSQIVLPPHLERIRERLAENIHELWVMNKIELGWQYGPVRDDNKRQHPCLVEFCKLPEQERNYNLQMSLETLKTLLALGCHVGIADEHAEEKVKKMKLPKNYQLTSGYKPAPMDLSFIKLTPSQEAMVDKLAENAHNVWARDRIRQGWTYGIQQDVKNRRNPRLVPYTLLDDRTKKSNKDSLREAVRTLLGYGYHLEAPDQDHASRAEVCSGTGERFRIFRAEKTYAVKAGRWYFEFEAVTAGDMRVGWSRPGCQPDLELGSDDRAFAFDGFKAQRWHQGNEHYGRSWQAGDVVGCMVDMNEHTMMFTLNGEILLDDSGSELAFKDFDVGDGFIPVCSLGVAQVGRMNFGKDVSTLKYFTICGLQEGYEPFAVNTNRDITMWLSKRLPQFLQVPSNHEHIEVTRIDGTIDSSPCLKVTQKSFGSQNNNTDIMFYRLSMPIECAEVFSKSVAGGLPGAGFYGPKNDLEDFDVDSDFEVLMKTAHGHLVPDRIDKDKETPKPEFNNHKDYAQEKPSRLKQRFLLRRTKPDYSTGHSARLTEDVLADDRDDYEYLMQTSTYYYSVRIFPGQEPANVWVGWITSDFHQYDTGFDLDRVRTVTVTLGDEKGKVHESIKRSNCYMVCAGESMSPGQGRNNSNGLEIGCVVDAASGLLTFIANGKELSTYYQVEPSTKLFPAVFAQATSPNVFQFELGRIKNVMPLSAGLFKSEHKNPVPQCPPRLHVQFLSHVLWSRMPNQFLKVDVSRISERQGWLVQCLDPLQFMSLHIPEENRSVDILELTEQEELLQFHYHTLRLYSAVCALGNHRVAHALCSHVDEPQLLYAIENKYMPGLLRAGYYDLLIDIHLSSYATARLMMNNEFIVPMTEETKSITLFPDENKKHGLPGIGLSTSLRPRMRFSSPSFVSISNDCYQYSPEFPLDILKAKTIQMLTEAVKEGSLHARDPVGGTTEFLFVPLIKLFYTLLIMGIFHNEDLKHILQLIEPSVFKEAAVPEEEGGTPEKEISIEDAKLEGEEEAKGGKRPKEGLLQMKLPEPVKLQMCLLLQYLCDCQVRHRIEAIVAFSDDFVAKLQDNQRFRYNEVMQALNMSAALTARKTREFRSPPQEQINMLLNFKDDKSECPCPEEIRDQLLDFHEDLMTHCGIELDEDGSLDGSNDLTIRGRLLSLVEKVTYLKKKQAEKPVASDSRKCSSLQQLISETMVRWAQESVIEDPELVRAMFVLLHRQYDGIGGLVRALPKTYTINGVSVEDTINLLASLGQIRSLLSVRMGKEEEKLMIRGLGDIMNNKVFYQHPNLMRALGMHETVMEVMVNVLGGGESKEITFPKMVANCCRFLCYFCRISRQNQKAMFDHLSYLLENSSVGLASPAMRGSTPLDVAAASVMDNNELALALREPDLEKVVRYLAGCGLQSCQMLVSKGYPDIGWNPVEGERYLDFLRFAVFCNGESVEENANVVVRLLIRRPECFGPALRGEGGNGLLAAMEEAIKIAEDPSRDGPSPTSGSSKTLDIEEEEDDTIHMGNAIMTFYAALIDLLGRCAPEMHLIHAGKGEAIRIRSILRSLIPLGDLVGVISIAFQMPTIAKDGKVVEPDMSAGFCPDHKAAMVLFLDRVYGIEVQDFLLHLLEVGFLPDLRAAASLDTAALSATDMALALNRYLCTAVLPLLTRCAPLFAGTEHHASLIDSLLHTVYRLSKGCSLTKAQRDSIEVCLLSICGQLRPSMMQHLLRRLVFDVPLLNEHAKMPLKLLTNHYERCWKYYCLPGGWGNFGAASEEELHLSRKLFWGIFDALSQKKYEQELFKLALPCLSAVAGALPPDYMESNYVSMMEKQSSMDSEGNFNPQPVDTSNITIPEKLEYFINKYAEHSHDKWSMDKLANGWIYGEIYSDSSKIQPLMKPYKLLSEKEKEIYRWPIKESLKTMLAWGWRIERTREGDSMALYNRTRRISQTSQVSIDAAHGYSPRAIDMSNVTLSRDLHAMAEMMAENYHNIWAKKKKLELESKGGGNHPLLVPYDTLTAKEKAKDREKAQDIFKFLQISGYVVSRGFKDLDLDTPSIEKRFAYSFLQQLIRYVDEAHQYILEFDGGSRSKGEHFPYEQEIKFFAKVVLPLIDQYFKNHRLYFLSAASRPLCTGGHASNKEKEMVTSLFCKLGVLVRHRISLFGNDATSIVNCLHILGQTLDARTVMKTGLDSVKSALRAFLDNAAEDLEKTMENLKQGQFTHTRSQPKGVTQIINYTTVALLPMLSSLFEHIGQHQFGEDLILEDVQVSCYRILTSLYALGTSKSIYVERQRSALGECLAAFAGAFPIAFLETHLDKHNVYSIYNTRSSRERAALSLPANVEDVCPNIPSLEKLMTEIIELAESGIRYTQMPYMMEVVLPMLCSYMSRWWEHGPENHPERAEMCCTALNSEHMNTLLGNILKIIYNNLGIDEGAWMKRLAVFSQPIINKVKPQLLKTHFLPLMEKLKKKAAMVVSEEDHLKAEARGDMSEAELLILDEFTTLARDLYAFYPLLIRFVDYNRAKWLKEPNPEAEELFRMVAEVFIYWSKSHNFKREEQNFVVQNEINNMSFLITDTKSKMSKAAISDQERKKMKRKGDRYSMQTSLIVAALKRLLPIGLNICAPGDQELIALAKNRFSLKDTEEEVRDIIRSNIHLQGKLEDPAIRWQMALYKDLPNRTEDPSDPERTVERVLGIANVLFHLEQKSKYTGRGYFSLVEHPQRSKKAVWHKLLSKQRKRAVVACFRMAPLYNLPRHRAVNLFLQGYEKSWIETEEHYFEDKLIEDLAKPGAELPEEDEAMKRVDPLHQLILLFSRTALTEKCKLEEDFLYMAYADIMAKSCHDEEDDDGEEEVKSFEEKEMEKQKLLYQQARLHDRGAAEMVLQTISASKGETGPMVAATLKLGIAILNGGNSTVQQKMLDYLKEKKDVGFFQSLAGLMQSCSVLDLNAFERQNKAEGLGMVTEEGSGEKVLQDDEFTCDLFRFLQLLCEGHNSDFQNYLRTQTGNNTTVNIIISTVDYLLRVQESISDFYWYYSGKDIIDEQGQRNFSKAIQVAKQVFNTLTEYIQGPCTGNQQSLAHSRLWDAVVGFLHVFAHMQMKLSQDSSQIELLKELMDLQKDMVVMLLSMLEGNVVNGTIGKQMVDMLVESSNNVEMILKFFDMFLKLKDLTSSDTFKEYDPDGKGVISKRDFHKAMESHKHYTQSETEFLLSCAETDENETLDYEEFVKRFHEPAKDIGFNVAVLLTNLSEHMPNDTRLQTFLELAESVLNYFQPFLGRIEIMGSAKRIERVYFEISESSRTQWEKPQVKESKRQFIFDVVNEGGEKEKMELFVNFCEDTIFEMQLAAQISESDLNERLANKEESEKERPEEQAPRMGFFSLLTIQSALFALRYNVLTLVRMLSLKSLKKQMKRMKKMTVKDMVLAFFSSYWSVFVTLLHFVASVCRGFFRIVSSLLLGGSLVEGAKKIKVAELLANMPDPTQDEVRGDEEEGERKPLESALPSEDLTDLKELTEESDLLSDIFGLDLKREGGQYKLIPHNPNAGLSDLMTNPVPVPEVQEKFQEQKAKEEKEEKEETKSEPEKAEGEDGEKEEKAKDEKSKQKLRQLHTHRYGEPEVPESAFWKKIIAYQQKLLNYFARNFYNMRMLALFVAFAINFILLFYKVSTSSVVEGKELPTRTSSDTAKVTNSLDSSPHRIIAVHYVLEESSGYMEPTLRILAILHTIISFFCIIGYYCLKVPLVIFKREKEVARKLEFDGLYITEQPSEDDIKGQWDRLVINTQSFPNNYWDKFVKRKVMDKYGEFYGRDRISELLGMDKAALDFSDAREKKKPKKDSSLSAVLNSIDVKYQMWKLGVVFTDNSFLYLAWYMTMSVLGHYNNFFFAAHLLDIAMGFKTLRTILSSVTHNGKQLVLTVGLLAVVVYLYTVVAFNFFRKFYNKSEDGDTPDMKCDDMLTCYMFHMYVGVRAGGGIGDEIEDPAGDEYEIYRIIFDITFFFFVIVILLAIIQGLIIDAFGELRDQQEQVKEDMETKCFICGIGNDYFDTVPHGFETHTLQEHNLANYLFFLMYLINKDETEHTGQESYVWKMYQERCWEFFPAGDCFRKQYEDQLN</sequence>
<feature type="chain" id="PRO_0000415582" description="Ryanodine receptor 2">
    <location>
        <begin position="1"/>
        <end position="4966"/>
    </location>
</feature>
<feature type="topological domain" description="Cytoplasmic" evidence="6">
    <location>
        <begin position="1"/>
        <end position="4231"/>
    </location>
</feature>
<feature type="transmembrane region" description="Helical" evidence="6">
    <location>
        <begin position="4232"/>
        <end position="4252"/>
    </location>
</feature>
<feature type="transmembrane region" description="Helical" evidence="6">
    <location>
        <begin position="4278"/>
        <end position="4298"/>
    </location>
</feature>
<feature type="transmembrane region" description="Helical" evidence="6">
    <location>
        <begin position="4502"/>
        <end position="4522"/>
    </location>
</feature>
<feature type="transmembrane region" description="Helical" evidence="6">
    <location>
        <begin position="4579"/>
        <end position="4599"/>
    </location>
</feature>
<feature type="transmembrane region" description="Helical" evidence="6">
    <location>
        <begin position="4729"/>
        <end position="4749"/>
    </location>
</feature>
<feature type="transmembrane region" description="Helical" evidence="6">
    <location>
        <begin position="4768"/>
        <end position="4788"/>
    </location>
</feature>
<feature type="intramembrane region" description="Pore-forming" evidence="21">
    <location>
        <begin position="4819"/>
        <end position="4828"/>
    </location>
</feature>
<feature type="transmembrane region" description="Helical" evidence="6">
    <location>
        <begin position="4849"/>
        <end position="4869"/>
    </location>
</feature>
<feature type="topological domain" description="Cytoplasmic" evidence="6">
    <location>
        <begin position="4870"/>
        <end position="4966"/>
    </location>
</feature>
<feature type="domain" description="MIR 1" evidence="7">
    <location>
        <begin position="110"/>
        <end position="165"/>
    </location>
</feature>
<feature type="domain" description="MIR 2" evidence="7">
    <location>
        <begin position="172"/>
        <end position="217"/>
    </location>
</feature>
<feature type="domain" description="MIR 3" evidence="7">
    <location>
        <begin position="225"/>
        <end position="280"/>
    </location>
</feature>
<feature type="domain" description="MIR 4" evidence="7">
    <location>
        <begin position="286"/>
        <end position="343"/>
    </location>
</feature>
<feature type="domain" description="MIR 5" evidence="7">
    <location>
        <begin position="351"/>
        <end position="408"/>
    </location>
</feature>
<feature type="domain" description="B30.2/SPRY 1" evidence="8">
    <location>
        <begin position="599"/>
        <end position="809"/>
    </location>
</feature>
<feature type="repeat" description="1">
    <location>
        <begin position="853"/>
        <end position="966"/>
    </location>
</feature>
<feature type="repeat" description="2">
    <location>
        <begin position="967"/>
        <end position="1080"/>
    </location>
</feature>
<feature type="domain" description="B30.2/SPRY 2" evidence="8">
    <location>
        <begin position="1025"/>
        <end position="1222"/>
    </location>
</feature>
<feature type="domain" description="B30.2/SPRY 3" evidence="8">
    <location>
        <begin position="1357"/>
        <end position="1563"/>
    </location>
</feature>
<feature type="repeat" description="3">
    <location>
        <begin position="2691"/>
        <end position="2809"/>
    </location>
</feature>
<feature type="repeat" description="4">
    <location>
        <begin position="2811"/>
        <end position="2924"/>
    </location>
</feature>
<feature type="region of interest" description="4 X approximate repeats">
    <location>
        <begin position="853"/>
        <end position="2924"/>
    </location>
</feature>
<feature type="region of interest" description="Disordered" evidence="9">
    <location>
        <begin position="1358"/>
        <end position="1377"/>
    </location>
</feature>
<feature type="region of interest" description="Disordered" evidence="9">
    <location>
        <begin position="1857"/>
        <end position="1890"/>
    </location>
</feature>
<feature type="region of interest" description="Disordered" evidence="9">
    <location>
        <begin position="2353"/>
        <end position="2372"/>
    </location>
</feature>
<feature type="region of interest" description="Interaction with CALM" evidence="1">
    <location>
        <begin position="3580"/>
        <end position="3609"/>
    </location>
</feature>
<feature type="region of interest" description="Disordered" evidence="9">
    <location>
        <begin position="4335"/>
        <end position="4363"/>
    </location>
</feature>
<feature type="region of interest" description="Disordered" evidence="9">
    <location>
        <begin position="4417"/>
        <end position="4466"/>
    </location>
</feature>
<feature type="compositionally biased region" description="Basic and acidic residues" evidence="9">
    <location>
        <begin position="1864"/>
        <end position="1890"/>
    </location>
</feature>
<feature type="compositionally biased region" description="Basic and acidic residues" evidence="9">
    <location>
        <begin position="4417"/>
        <end position="4457"/>
    </location>
</feature>
<feature type="modified residue" description="Phosphoserine" evidence="30">
    <location>
        <position position="1341"/>
    </location>
</feature>
<feature type="modified residue" description="Phosphoserine" evidence="2">
    <location>
        <position position="1870"/>
    </location>
</feature>
<feature type="modified residue" description="Phosphoserine; by PKA" evidence="12">
    <location>
        <position position="2030"/>
    </location>
</feature>
<feature type="modified residue" description="Phosphoserine" evidence="30">
    <location>
        <position position="2368"/>
    </location>
</feature>
<feature type="modified residue" description="Phosphoserine" evidence="2">
    <location>
        <position position="2696"/>
    </location>
</feature>
<feature type="modified residue" description="Phosphoserine" evidence="30">
    <location>
        <position position="2796"/>
    </location>
</feature>
<feature type="modified residue" description="Phosphoserine; by CaMK2D and PKA" evidence="14 15 30">
    <location>
        <position position="2807"/>
    </location>
</feature>
<feature type="modified residue" description="Phosphoserine" evidence="30">
    <location>
        <position position="2810"/>
    </location>
</feature>
<feature type="modified residue" description="Phosphoserine; by CaMK2D" evidence="15 30">
    <location>
        <position position="2813"/>
    </location>
</feature>
<feature type="modified residue" description="Phosphoserine" evidence="30">
    <location>
        <position position="2946"/>
    </location>
</feature>
<feature type="mutagenesis site" description="No change to global protein fold or protein stability. Alters local protein folding." evidence="13">
    <original>A</original>
    <variation>V</variation>
    <location>
        <position position="77"/>
    </location>
</feature>
<feature type="mutagenesis site" description="No change to global protein fold or protein stability. Alters local protein folding." evidence="13">
    <original>V</original>
    <variation>M</variation>
    <location>
        <position position="186"/>
    </location>
</feature>
<feature type="mutagenesis site" description="Protects against tachycardia and subsequent death due to heart failure." evidence="15">
    <original>S</original>
    <variation>A</variation>
    <location>
        <position position="2813"/>
    </location>
</feature>
<feature type="mutagenesis site" description="Abolishes phosphorylation by CaMK2D. Tendency to tachycardia and subsequent death due to heart failure." evidence="15">
    <original>S</original>
    <variation>D</variation>
    <location>
        <position position="2813"/>
    </location>
</feature>
<feature type="mutagenesis site" description="Mutant mice show systolic arrhythmogenic abnormalities. Spontaneous Ca(2+) release from the sarcoplasmic reticulum in the heart is diminished." evidence="17">
    <original>D</original>
    <variation>A</variation>
    <location>
        <position position="4645"/>
    </location>
</feature>
<feature type="mutagenesis site" description="Strongly reduced calcium channel activity. Abolishes ryanodine binding." evidence="10">
    <original>G</original>
    <variation>A</variation>
    <location>
        <position position="4819"/>
    </location>
</feature>
<feature type="mutagenesis site" description="No effect on calcium channel activity. Abolishes ryanodine binding." evidence="10">
    <original>R</original>
    <variation>A</variation>
    <location>
        <position position="4821"/>
    </location>
</feature>
<feature type="mutagenesis site" description="Reduced calcium channel activity. Reduces single channel conductance by 97%. No effect on ryaodine binding." evidence="10">
    <original>G</original>
    <variation>A</variation>
    <location>
        <position position="4823"/>
    </location>
</feature>
<feature type="mutagenesis site" description="No effect on calcium channel activity. Abolishes ryanodine binding." evidence="10">
    <original>G</original>
    <variation>A</variation>
    <location>
        <position position="4824"/>
    </location>
</feature>
<feature type="mutagenesis site" description="Strongly reduced calcium channel activity. Abolishes ryanodine binding." evidence="10">
    <original>G</original>
    <variation>A</variation>
    <location>
        <position position="4825"/>
    </location>
</feature>
<feature type="mutagenesis site" description="No effect on calcium channel activity. Abolishes ryanodine binding." evidence="10">
    <original>G</original>
    <variation>A</variation>
    <location>
        <position position="4827"/>
    </location>
</feature>
<feature type="mutagenesis site" description="No effect on calcium channel activity. Abolishes ryanodine binding." evidence="10">
    <original>D</original>
    <variation>A</variation>
    <location>
        <position position="4828"/>
    </location>
</feature>
<feature type="sequence conflict" description="In Ref. 1; AAG34081." evidence="21" ref="1">
    <original>N</original>
    <variation>S</variation>
    <location>
        <position position="1332"/>
    </location>
</feature>
<feature type="sequence conflict" description="In Ref. 1; AAG34081." evidence="21" ref="1">
    <original>D</original>
    <variation>G</variation>
    <location>
        <position position="1412"/>
    </location>
</feature>
<feature type="sequence conflict" description="In Ref. 1; AAG34081." evidence="21" ref="1">
    <original>R</original>
    <variation>K</variation>
    <location>
        <position position="1962"/>
    </location>
</feature>
<feature type="sequence conflict" description="In Ref. 1; AAG34081." evidence="21" ref="1">
    <original>V</original>
    <variation>VA</variation>
    <location>
        <position position="2265"/>
    </location>
</feature>
<feature type="sequence conflict" description="In Ref. 1; AAG34081." evidence="21" ref="1">
    <original>P</original>
    <variation>R</variation>
    <location>
        <position position="2532"/>
    </location>
</feature>
<feature type="sequence conflict" description="In Ref. 1; AAG34081." evidence="21" ref="1">
    <original>A</original>
    <variation>T</variation>
    <location>
        <position position="3192"/>
    </location>
</feature>
<feature type="sequence conflict" description="In Ref. 1; AAG34081." evidence="21" ref="1">
    <original>L</original>
    <variation>F</variation>
    <location>
        <position position="3533"/>
    </location>
</feature>
<feature type="sequence conflict" description="In Ref. 4; CAA58785." evidence="21" ref="4">
    <original>I</original>
    <variation>T</variation>
    <location>
        <position position="4324"/>
    </location>
</feature>
<feature type="sequence conflict" description="In Ref. 4; CAA58785." evidence="21" ref="4">
    <original>V</original>
    <variation>E</variation>
    <location>
        <position position="4853"/>
    </location>
</feature>
<feature type="strand" evidence="34">
    <location>
        <begin position="15"/>
        <end position="17"/>
    </location>
</feature>
<feature type="strand" evidence="31">
    <location>
        <begin position="19"/>
        <end position="28"/>
    </location>
</feature>
<feature type="strand" evidence="31">
    <location>
        <begin position="31"/>
        <end position="38"/>
    </location>
</feature>
<feature type="strand" evidence="31">
    <location>
        <begin position="41"/>
        <end position="43"/>
    </location>
</feature>
<feature type="strand" evidence="31">
    <location>
        <begin position="48"/>
        <end position="51"/>
    </location>
</feature>
<feature type="turn" evidence="35">
    <location>
        <begin position="53"/>
        <end position="57"/>
    </location>
</feature>
<feature type="helix" evidence="31">
    <location>
        <begin position="62"/>
        <end position="64"/>
    </location>
</feature>
<feature type="strand" evidence="31">
    <location>
        <begin position="67"/>
        <end position="73"/>
    </location>
</feature>
<feature type="helix" evidence="31">
    <location>
        <begin position="75"/>
        <end position="84"/>
    </location>
</feature>
<feature type="strand" evidence="32">
    <location>
        <begin position="97"/>
        <end position="102"/>
    </location>
</feature>
<feature type="strand" evidence="31">
    <location>
        <begin position="118"/>
        <end position="123"/>
    </location>
</feature>
<feature type="turn" evidence="31">
    <location>
        <begin position="124"/>
        <end position="126"/>
    </location>
</feature>
<feature type="strand" evidence="31">
    <location>
        <begin position="129"/>
        <end position="132"/>
    </location>
</feature>
<feature type="strand" evidence="31">
    <location>
        <begin position="145"/>
        <end position="151"/>
    </location>
</feature>
<feature type="strand" evidence="31">
    <location>
        <begin position="154"/>
        <end position="156"/>
    </location>
</feature>
<feature type="strand" evidence="31">
    <location>
        <begin position="159"/>
        <end position="167"/>
    </location>
</feature>
<feature type="strand" evidence="31">
    <location>
        <begin position="180"/>
        <end position="185"/>
    </location>
</feature>
<feature type="turn" evidence="31">
    <location>
        <begin position="186"/>
        <end position="188"/>
    </location>
</feature>
<feature type="strand" evidence="31">
    <location>
        <begin position="191"/>
        <end position="196"/>
    </location>
</feature>
<feature type="strand" evidence="31">
    <location>
        <begin position="198"/>
        <end position="208"/>
    </location>
</feature>
<feature type="strand" evidence="31">
    <location>
        <begin position="212"/>
        <end position="216"/>
    </location>
</feature>
<feature type="helix" evidence="35">
    <location>
        <begin position="220"/>
        <end position="222"/>
    </location>
</feature>
<feature type="strand" evidence="35">
    <location>
        <begin position="233"/>
        <end position="238"/>
    </location>
</feature>
<feature type="turn" evidence="35">
    <location>
        <begin position="239"/>
        <end position="242"/>
    </location>
</feature>
<feature type="strand" evidence="35">
    <location>
        <begin position="243"/>
        <end position="246"/>
    </location>
</feature>
<feature type="helix" evidence="35">
    <location>
        <begin position="256"/>
        <end position="258"/>
    </location>
</feature>
<feature type="strand" evidence="35">
    <location>
        <begin position="261"/>
        <end position="264"/>
    </location>
</feature>
<feature type="helix" evidence="35">
    <location>
        <begin position="265"/>
        <end position="269"/>
    </location>
</feature>
<feature type="helix" evidence="35">
    <location>
        <begin position="271"/>
        <end position="273"/>
    </location>
</feature>
<feature type="strand" evidence="35">
    <location>
        <begin position="275"/>
        <end position="280"/>
    </location>
</feature>
<feature type="turn" evidence="35">
    <location>
        <begin position="283"/>
        <end position="286"/>
    </location>
</feature>
<feature type="strand" evidence="35">
    <location>
        <begin position="294"/>
        <end position="299"/>
    </location>
</feature>
<feature type="turn" evidence="35">
    <location>
        <begin position="300"/>
        <end position="302"/>
    </location>
</feature>
<feature type="strand" evidence="35">
    <location>
        <begin position="305"/>
        <end position="308"/>
    </location>
</feature>
<feature type="strand" evidence="35">
    <location>
        <begin position="314"/>
        <end position="317"/>
    </location>
</feature>
<feature type="helix" evidence="35">
    <location>
        <begin position="319"/>
        <end position="321"/>
    </location>
</feature>
<feature type="helix" evidence="35">
    <location>
        <begin position="324"/>
        <end position="327"/>
    </location>
</feature>
<feature type="strand" evidence="35">
    <location>
        <begin position="329"/>
        <end position="333"/>
    </location>
</feature>
<feature type="turn" evidence="35">
    <location>
        <begin position="356"/>
        <end position="358"/>
    </location>
</feature>
<feature type="strand" evidence="35">
    <location>
        <begin position="360"/>
        <end position="365"/>
    </location>
</feature>
<feature type="turn" evidence="35">
    <location>
        <begin position="366"/>
        <end position="368"/>
    </location>
</feature>
<feature type="strand" evidence="35">
    <location>
        <begin position="371"/>
        <end position="374"/>
    </location>
</feature>
<feature type="strand" evidence="35">
    <location>
        <begin position="389"/>
        <end position="396"/>
    </location>
</feature>
<feature type="strand" evidence="35">
    <location>
        <begin position="403"/>
        <end position="407"/>
    </location>
</feature>
<feature type="helix" evidence="35">
    <location>
        <begin position="410"/>
        <end position="436"/>
    </location>
</feature>
<feature type="helix" evidence="35">
    <location>
        <begin position="449"/>
        <end position="462"/>
    </location>
</feature>
<feature type="helix" evidence="35">
    <location>
        <begin position="472"/>
        <end position="491"/>
    </location>
</feature>
<feature type="helix" evidence="35">
    <location>
        <begin position="494"/>
        <end position="505"/>
    </location>
</feature>
<feature type="strand" evidence="35">
    <location>
        <begin position="508"/>
        <end position="510"/>
    </location>
</feature>
<feature type="helix" evidence="35">
    <location>
        <begin position="511"/>
        <end position="518"/>
    </location>
</feature>
<feature type="helix" evidence="35">
    <location>
        <begin position="520"/>
        <end position="541"/>
    </location>
</feature>
<feature type="strand" evidence="37">
    <location>
        <begin position="653"/>
        <end position="658"/>
    </location>
</feature>
<feature type="strand" evidence="37">
    <location>
        <begin position="672"/>
        <end position="681"/>
    </location>
</feature>
<feature type="strand" evidence="37">
    <location>
        <begin position="693"/>
        <end position="699"/>
    </location>
</feature>
<feature type="helix" evidence="37">
    <location>
        <begin position="700"/>
        <end position="702"/>
    </location>
</feature>
<feature type="strand" evidence="37">
    <location>
        <begin position="704"/>
        <end position="706"/>
    </location>
</feature>
<feature type="helix" evidence="37">
    <location>
        <begin position="707"/>
        <end position="709"/>
    </location>
</feature>
<feature type="strand" evidence="37">
    <location>
        <begin position="710"/>
        <end position="712"/>
    </location>
</feature>
<feature type="strand" evidence="37">
    <location>
        <begin position="724"/>
        <end position="727"/>
    </location>
</feature>
<feature type="strand" evidence="37">
    <location>
        <begin position="729"/>
        <end position="734"/>
    </location>
</feature>
<feature type="strand" evidence="37">
    <location>
        <begin position="737"/>
        <end position="740"/>
    </location>
</feature>
<feature type="strand" evidence="37">
    <location>
        <begin position="754"/>
        <end position="760"/>
    </location>
</feature>
<feature type="turn" evidence="37">
    <location>
        <begin position="761"/>
        <end position="764"/>
    </location>
</feature>
<feature type="strand" evidence="37">
    <location>
        <begin position="765"/>
        <end position="770"/>
    </location>
</feature>
<feature type="strand" evidence="37">
    <location>
        <begin position="788"/>
        <end position="794"/>
    </location>
</feature>
<feature type="strand" evidence="37">
    <location>
        <begin position="799"/>
        <end position="803"/>
    </location>
</feature>
<feature type="helix" evidence="37">
    <location>
        <begin position="822"/>
        <end position="825"/>
    </location>
</feature>
<feature type="strand" evidence="37">
    <location>
        <begin position="833"/>
        <end position="839"/>
    </location>
</feature>
<feature type="strand" evidence="36">
    <location>
        <begin position="1086"/>
        <end position="1089"/>
    </location>
</feature>
<feature type="helix" evidence="36">
    <location>
        <begin position="1092"/>
        <end position="1094"/>
    </location>
</feature>
<feature type="strand" evidence="36">
    <location>
        <begin position="1096"/>
        <end position="1109"/>
    </location>
</feature>
<feature type="strand" evidence="36">
    <location>
        <begin position="1111"/>
        <end position="1118"/>
    </location>
</feature>
<feature type="strand" evidence="36">
    <location>
        <begin position="1130"/>
        <end position="1138"/>
    </location>
</feature>
<feature type="turn" evidence="36">
    <location>
        <begin position="1139"/>
        <end position="1142"/>
    </location>
</feature>
<feature type="strand" evidence="36">
    <location>
        <begin position="1143"/>
        <end position="1153"/>
    </location>
</feature>
<feature type="strand" evidence="36">
    <location>
        <begin position="1161"/>
        <end position="1167"/>
    </location>
</feature>
<feature type="turn" evidence="36">
    <location>
        <begin position="1168"/>
        <end position="1171"/>
    </location>
</feature>
<feature type="strand" evidence="36">
    <location>
        <begin position="1172"/>
        <end position="1177"/>
    </location>
</feature>
<feature type="strand" evidence="36">
    <location>
        <begin position="1191"/>
        <end position="1194"/>
    </location>
</feature>
<feature type="strand" evidence="36">
    <location>
        <begin position="1201"/>
        <end position="1207"/>
    </location>
</feature>
<feature type="strand" evidence="36">
    <location>
        <begin position="1213"/>
        <end position="1216"/>
    </location>
</feature>
<feature type="helix" evidence="36">
    <location>
        <begin position="1221"/>
        <end position="1223"/>
    </location>
</feature>
<feature type="turn" evidence="36">
    <location>
        <begin position="1227"/>
        <end position="1235"/>
    </location>
</feature>
<feature type="helix" evidence="36">
    <location>
        <begin position="1239"/>
        <end position="1242"/>
    </location>
</feature>
<feature type="helix" evidence="33">
    <location>
        <begin position="2714"/>
        <end position="2716"/>
    </location>
</feature>
<feature type="helix" evidence="33">
    <location>
        <begin position="2717"/>
        <end position="2737"/>
    </location>
</feature>
<feature type="turn" evidence="33">
    <location>
        <begin position="2748"/>
        <end position="2751"/>
    </location>
</feature>
<feature type="helix" evidence="38">
    <location>
        <begin position="2754"/>
        <end position="2756"/>
    </location>
</feature>
<feature type="helix" evidence="33">
    <location>
        <begin position="2759"/>
        <end position="2761"/>
    </location>
</feature>
<feature type="helix" evidence="33">
    <location>
        <begin position="2764"/>
        <end position="2783"/>
    </location>
</feature>
<feature type="strand" evidence="33">
    <location>
        <begin position="2787"/>
        <end position="2790"/>
    </location>
</feature>
<feature type="strand" evidence="40">
    <location>
        <begin position="2792"/>
        <end position="2795"/>
    </location>
</feature>
<feature type="helix" evidence="33">
    <location>
        <begin position="2796"/>
        <end position="2799"/>
    </location>
</feature>
<feature type="helix" evidence="39">
    <location>
        <begin position="2811"/>
        <end position="2816"/>
    </location>
</feature>
<feature type="helix" evidence="33">
    <location>
        <begin position="2817"/>
        <end position="2819"/>
    </location>
</feature>
<feature type="helix" evidence="33">
    <location>
        <begin position="2827"/>
        <end position="2829"/>
    </location>
</feature>
<feature type="helix" evidence="33">
    <location>
        <begin position="2834"/>
        <end position="2861"/>
    </location>
</feature>
<feature type="helix" evidence="33">
    <location>
        <begin position="2873"/>
        <end position="2875"/>
    </location>
</feature>
<feature type="helix" evidence="33">
    <location>
        <begin position="2878"/>
        <end position="2897"/>
    </location>
</feature>
<feature type="strand" evidence="33">
    <location>
        <begin position="2900"/>
        <end position="2903"/>
    </location>
</feature>
<proteinExistence type="evidence at protein level"/>
<name>RYR2_MOUSE</name>
<gene>
    <name evidence="23" type="primary">Ryr2</name>
</gene>
<protein>
    <recommendedName>
        <fullName evidence="22">Ryanodine receptor 2</fullName>
        <shortName>RYR-2</shortName>
        <shortName>RyR2</shortName>
    </recommendedName>
    <alternativeName>
        <fullName>Cardiac muscle ryanodine receptor</fullName>
    </alternativeName>
    <alternativeName>
        <fullName>Cardiac muscle ryanodine receptor-calcium release channel</fullName>
    </alternativeName>
    <alternativeName>
        <fullName>Type 2 ryanodine receptor</fullName>
    </alternativeName>
</protein>
<keyword id="KW-0002">3D-structure</keyword>
<keyword id="KW-0106">Calcium</keyword>
<keyword id="KW-0107">Calcium channel</keyword>
<keyword id="KW-0109">Calcium transport</keyword>
<keyword id="KW-0112">Calmodulin-binding</keyword>
<keyword id="KW-0217">Developmental protein</keyword>
<keyword id="KW-0407">Ion channel</keyword>
<keyword id="KW-0406">Ion transport</keyword>
<keyword id="KW-1071">Ligand-gated ion channel</keyword>
<keyword id="KW-0472">Membrane</keyword>
<keyword id="KW-0597">Phosphoprotein</keyword>
<keyword id="KW-1185">Reference proteome</keyword>
<keyword id="KW-0677">Repeat</keyword>
<keyword id="KW-0703">Sarcoplasmic reticulum</keyword>
<keyword id="KW-0812">Transmembrane</keyword>
<keyword id="KW-1133">Transmembrane helix</keyword>
<keyword id="KW-0813">Transport</keyword>